<keyword id="KW-1015">Disulfide bond</keyword>
<keyword id="KW-0479">Metal-binding</keyword>
<keyword id="KW-0481">Metalloenzyme inhibitor</keyword>
<keyword id="KW-0483">Metalloprotease inhibitor</keyword>
<keyword id="KW-0646">Protease inhibitor</keyword>
<keyword id="KW-1185">Reference proteome</keyword>
<keyword id="KW-0964">Secreted</keyword>
<keyword id="KW-0732">Signal</keyword>
<keyword id="KW-0862">Zinc</keyword>
<gene>
    <name type="primary">TIMP2</name>
</gene>
<comment type="function">
    <text>Complexes with metalloproteinases (such as collagenases) and irreversibly inactivates them by binding to their catalytic zinc cofactor.</text>
</comment>
<comment type="subunit">
    <text evidence="1">Interacts (via the C-terminal) with MMP2 (via the C-terminal PEX domain); the interaction inhibits the MMP2 activity.</text>
</comment>
<comment type="subcellular location">
    <subcellularLocation>
        <location>Secreted</location>
    </subcellularLocation>
</comment>
<comment type="tissue specificity">
    <text>Predominantly expressed in the lung in alveolar macrophages and epithelial cells. Also found in brain, kidney, intestine, spleen and heart.</text>
</comment>
<comment type="PTM">
    <text>The activity of TIMP2 is dependent on the presence of disulfide bonds.</text>
</comment>
<comment type="similarity">
    <text evidence="5">Belongs to the protease inhibitor I35 (TIMP) family.</text>
</comment>
<protein>
    <recommendedName>
        <fullName>Metalloproteinase inhibitor 2</fullName>
    </recommendedName>
    <alternativeName>
        <fullName>Tissue inhibitor of metalloproteinases 2</fullName>
        <shortName>TIMP-2</shortName>
    </alternativeName>
</protein>
<evidence type="ECO:0000250" key="1"/>
<evidence type="ECO:0000250" key="2">
    <source>
        <dbReference type="UniProtKB" id="P16035"/>
    </source>
</evidence>
<evidence type="ECO:0000255" key="3"/>
<evidence type="ECO:0000255" key="4">
    <source>
        <dbReference type="PROSITE-ProRule" id="PRU00295"/>
    </source>
</evidence>
<evidence type="ECO:0000305" key="5"/>
<reference key="1">
    <citation type="journal article" date="2000" name="Am. J. Physiol.">
        <title>Cloning and expression of guinea pig TIMP-2. Expression in normal and hyperoxic lung injury.</title>
        <authorList>
            <person name="Melendez J."/>
            <person name="Maldonado V."/>
            <person name="Selman M."/>
            <person name="Pardo A."/>
        </authorList>
    </citation>
    <scope>NUCLEOTIDE SEQUENCE [MRNA]</scope>
    <source>
        <strain>Hartley</strain>
        <tissue>Lung</tissue>
    </source>
</reference>
<name>TIMP2_CAVPO</name>
<organism>
    <name type="scientific">Cavia porcellus</name>
    <name type="common">Guinea pig</name>
    <dbReference type="NCBI Taxonomy" id="10141"/>
    <lineage>
        <taxon>Eukaryota</taxon>
        <taxon>Metazoa</taxon>
        <taxon>Chordata</taxon>
        <taxon>Craniata</taxon>
        <taxon>Vertebrata</taxon>
        <taxon>Euteleostomi</taxon>
        <taxon>Mammalia</taxon>
        <taxon>Eutheria</taxon>
        <taxon>Euarchontoglires</taxon>
        <taxon>Glires</taxon>
        <taxon>Rodentia</taxon>
        <taxon>Hystricomorpha</taxon>
        <taxon>Caviidae</taxon>
        <taxon>Cavia</taxon>
    </lineage>
</organism>
<accession>Q9WUC6</accession>
<sequence length="220" mass="24318">MGATARSLRLALGLLLLGTLPRGADACSCSPVHPQQAFCNADVVIRAKAVSEKEVDSGNDIYGNPIKRIQYEIKQIKMFKGPEKDIEFIYTAPSSAVCGVSLDVGGKKEYLIAGKAEGDGKMHITLCDFIVPWDTLSTTQKKSLNHRYQMGCECKITRCPMIPCYISSPDECLWMDWVTEKSINGHQAKFFACIKRSDGSCAWYRGAAPPKQEFLDIEDP</sequence>
<dbReference type="EMBL" id="AF127803">
    <property type="protein sequence ID" value="AAD28252.1"/>
    <property type="molecule type" value="mRNA"/>
</dbReference>
<dbReference type="RefSeq" id="NP_001166495.1">
    <property type="nucleotide sequence ID" value="NM_001173024.1"/>
</dbReference>
<dbReference type="BMRB" id="Q9WUC6"/>
<dbReference type="SMR" id="Q9WUC6"/>
<dbReference type="FunCoup" id="Q9WUC6">
    <property type="interactions" value="66"/>
</dbReference>
<dbReference type="STRING" id="10141.ENSCPOP00000007780"/>
<dbReference type="MEROPS" id="I35.002"/>
<dbReference type="Ensembl" id="ENSCPOT00000008741.3">
    <property type="protein sequence ID" value="ENSCPOP00000007780.2"/>
    <property type="gene ID" value="ENSCPOG00000008663.4"/>
</dbReference>
<dbReference type="GeneID" id="100135629"/>
<dbReference type="KEGG" id="cpoc:100135629"/>
<dbReference type="CTD" id="7077"/>
<dbReference type="VEuPathDB" id="HostDB:ENSCPOG00000008663"/>
<dbReference type="eggNOG" id="KOG4745">
    <property type="taxonomic scope" value="Eukaryota"/>
</dbReference>
<dbReference type="GeneTree" id="ENSGT00940000158348"/>
<dbReference type="HOGENOM" id="CLU_084029_0_0_1"/>
<dbReference type="InParanoid" id="Q9WUC6"/>
<dbReference type="OMA" id="FIEPWDS"/>
<dbReference type="OrthoDB" id="6041373at2759"/>
<dbReference type="TreeFam" id="TF317409"/>
<dbReference type="Proteomes" id="UP000005447">
    <property type="component" value="Unassembled WGS sequence"/>
</dbReference>
<dbReference type="Bgee" id="ENSCPOG00000008663">
    <property type="expression patterns" value="Expressed in hypothalamus and 13 other cell types or tissues"/>
</dbReference>
<dbReference type="GO" id="GO:0031012">
    <property type="term" value="C:extracellular matrix"/>
    <property type="evidence" value="ECO:0007669"/>
    <property type="project" value="TreeGrafter"/>
</dbReference>
<dbReference type="GO" id="GO:0005615">
    <property type="term" value="C:extracellular space"/>
    <property type="evidence" value="ECO:0007669"/>
    <property type="project" value="TreeGrafter"/>
</dbReference>
<dbReference type="GO" id="GO:0008191">
    <property type="term" value="F:metalloendopeptidase inhibitor activity"/>
    <property type="evidence" value="ECO:0007669"/>
    <property type="project" value="InterPro"/>
</dbReference>
<dbReference type="GO" id="GO:0002020">
    <property type="term" value="F:protease binding"/>
    <property type="evidence" value="ECO:0007669"/>
    <property type="project" value="Ensembl"/>
</dbReference>
<dbReference type="GO" id="GO:0008270">
    <property type="term" value="F:zinc ion binding"/>
    <property type="evidence" value="ECO:0000250"/>
    <property type="project" value="UniProtKB"/>
</dbReference>
<dbReference type="GO" id="GO:0051045">
    <property type="term" value="P:negative regulation of membrane protein ectodomain proteolysis"/>
    <property type="evidence" value="ECO:0007669"/>
    <property type="project" value="TreeGrafter"/>
</dbReference>
<dbReference type="GO" id="GO:0034097">
    <property type="term" value="P:response to cytokine"/>
    <property type="evidence" value="ECO:0007669"/>
    <property type="project" value="TreeGrafter"/>
</dbReference>
<dbReference type="GO" id="GO:0009725">
    <property type="term" value="P:response to hormone"/>
    <property type="evidence" value="ECO:0007669"/>
    <property type="project" value="TreeGrafter"/>
</dbReference>
<dbReference type="CDD" id="cd03585">
    <property type="entry name" value="NTR_TIMP"/>
    <property type="match status" value="1"/>
</dbReference>
<dbReference type="FunFam" id="2.40.50.120:FF:000007">
    <property type="entry name" value="Metalloproteinase inhibitor 2"/>
    <property type="match status" value="1"/>
</dbReference>
<dbReference type="FunFam" id="3.90.370.10:FF:000001">
    <property type="entry name" value="Metalloproteinase inhibitor 3"/>
    <property type="match status" value="1"/>
</dbReference>
<dbReference type="Gene3D" id="2.40.50.120">
    <property type="match status" value="1"/>
</dbReference>
<dbReference type="Gene3D" id="3.90.370.10">
    <property type="entry name" value="Tissue inhibitor of metalloproteinase-1. Chain B, domain 1"/>
    <property type="match status" value="1"/>
</dbReference>
<dbReference type="InterPro" id="IPR001134">
    <property type="entry name" value="Netrin_domain"/>
</dbReference>
<dbReference type="InterPro" id="IPR001820">
    <property type="entry name" value="TIMP"/>
</dbReference>
<dbReference type="InterPro" id="IPR008993">
    <property type="entry name" value="TIMP-like_OB-fold"/>
</dbReference>
<dbReference type="InterPro" id="IPR027465">
    <property type="entry name" value="TIMP_C"/>
</dbReference>
<dbReference type="InterPro" id="IPR030490">
    <property type="entry name" value="TIMP_CS"/>
</dbReference>
<dbReference type="PANTHER" id="PTHR11844">
    <property type="entry name" value="METALLOPROTEASE INHIBITOR"/>
    <property type="match status" value="1"/>
</dbReference>
<dbReference type="PANTHER" id="PTHR11844:SF24">
    <property type="entry name" value="METALLOPROTEINASE INHIBITOR 2"/>
    <property type="match status" value="1"/>
</dbReference>
<dbReference type="Pfam" id="PF00965">
    <property type="entry name" value="TIMP"/>
    <property type="match status" value="1"/>
</dbReference>
<dbReference type="SMART" id="SM00206">
    <property type="entry name" value="NTR"/>
    <property type="match status" value="1"/>
</dbReference>
<dbReference type="SUPFAM" id="SSF50242">
    <property type="entry name" value="TIMP-like"/>
    <property type="match status" value="1"/>
</dbReference>
<dbReference type="PROSITE" id="PS50189">
    <property type="entry name" value="NTR"/>
    <property type="match status" value="1"/>
</dbReference>
<dbReference type="PROSITE" id="PS00288">
    <property type="entry name" value="TIMP"/>
    <property type="match status" value="1"/>
</dbReference>
<proteinExistence type="evidence at transcript level"/>
<feature type="signal peptide" evidence="3">
    <location>
        <begin position="1"/>
        <end position="26"/>
    </location>
</feature>
<feature type="chain" id="PRO_0000034333" description="Metalloproteinase inhibitor 2">
    <location>
        <begin position="27"/>
        <end position="220"/>
    </location>
</feature>
<feature type="domain" description="NTR" evidence="4">
    <location>
        <begin position="27"/>
        <end position="152"/>
    </location>
</feature>
<feature type="region of interest" description="Involved in metalloproteinase-binding" evidence="2">
    <location>
        <begin position="27"/>
        <end position="30"/>
    </location>
</feature>
<feature type="region of interest" description="Involved in metalloproteinase-binding" evidence="2">
    <location>
        <begin position="95"/>
        <end position="96"/>
    </location>
</feature>
<feature type="binding site" evidence="2">
    <location>
        <position position="27"/>
    </location>
    <ligand>
        <name>Zn(2+)</name>
        <dbReference type="ChEBI" id="CHEBI:29105"/>
        <note>ligand shared with metalloproteinase partner</note>
    </ligand>
</feature>
<feature type="site" description="Involved in metalloproteinase-binding" evidence="2">
    <location>
        <position position="40"/>
    </location>
</feature>
<feature type="site" description="Involved in metalloproteinase-binding" evidence="2">
    <location>
        <position position="61"/>
    </location>
</feature>
<feature type="site" description="Involved in metalloproteinase-binding" evidence="2">
    <location>
        <position position="67"/>
    </location>
</feature>
<feature type="disulfide bond" evidence="4">
    <location>
        <begin position="27"/>
        <end position="98"/>
    </location>
</feature>
<feature type="disulfide bond" evidence="4">
    <location>
        <begin position="29"/>
        <end position="127"/>
    </location>
</feature>
<feature type="disulfide bond" evidence="4">
    <location>
        <begin position="39"/>
        <end position="152"/>
    </location>
</feature>
<feature type="disulfide bond" evidence="4">
    <location>
        <begin position="154"/>
        <end position="201"/>
    </location>
</feature>
<feature type="disulfide bond" evidence="4">
    <location>
        <begin position="159"/>
        <end position="164"/>
    </location>
</feature>
<feature type="disulfide bond" evidence="4">
    <location>
        <begin position="172"/>
        <end position="193"/>
    </location>
</feature>